<protein>
    <recommendedName>
        <fullName>Protein Vpx</fullName>
    </recommendedName>
    <alternativeName>
        <fullName>Viral protein X</fullName>
    </alternativeName>
    <alternativeName>
        <fullName>X ORF protein</fullName>
    </alternativeName>
</protein>
<sequence length="113" mass="13208">MTDPRERVPPGNSGEETIGEAFEWLERTIEALNREAVNHLPRELIFQVWQRSWRYWHDEQGMSASYTKYRYLCLMQKAIFTHFKRGCTCWGEDMGREGLEDQGPPPPPPPGLV</sequence>
<evidence type="ECO:0000250" key="1"/>
<evidence type="ECO:0000250" key="2">
    <source>
        <dbReference type="UniProtKB" id="P12454"/>
    </source>
</evidence>
<evidence type="ECO:0000250" key="3">
    <source>
        <dbReference type="UniProtKB" id="P19508"/>
    </source>
</evidence>
<evidence type="ECO:0000256" key="4">
    <source>
        <dbReference type="SAM" id="MobiDB-lite"/>
    </source>
</evidence>
<evidence type="ECO:0000269" key="5">
    <source>
    </source>
</evidence>
<evidence type="ECO:0000269" key="6">
    <source>
    </source>
</evidence>
<evidence type="ECO:0000269" key="7">
    <source>
    </source>
</evidence>
<evidence type="ECO:0000269" key="8">
    <source>
    </source>
</evidence>
<evidence type="ECO:0000305" key="9"/>
<organism>
    <name type="scientific">Human immunodeficiency virus type 2 subtype A (isolate BEN)</name>
    <name type="common">HIV-2</name>
    <dbReference type="NCBI Taxonomy" id="11714"/>
    <lineage>
        <taxon>Viruses</taxon>
        <taxon>Riboviria</taxon>
        <taxon>Pararnavirae</taxon>
        <taxon>Artverviricota</taxon>
        <taxon>Revtraviricetes</taxon>
        <taxon>Ortervirales</taxon>
        <taxon>Retroviridae</taxon>
        <taxon>Orthoretrovirinae</taxon>
        <taxon>Lentivirus</taxon>
        <taxon>Human immunodeficiency virus 2</taxon>
    </lineage>
</organism>
<organismHost>
    <name type="scientific">Homo sapiens</name>
    <name type="common">Human</name>
    <dbReference type="NCBI Taxonomy" id="9606"/>
</organismHost>
<reference key="1">
    <citation type="journal article" date="1990" name="Virology">
        <title>A novel proviral clone of HIV-2: biological and phylogenetic relationship to other primate immunodeficiency viruses.</title>
        <authorList>
            <person name="Kirchhoff F."/>
            <person name="Jentsch K."/>
            <person name="Bachmann B."/>
            <person name="Stuke A."/>
            <person name="Laloux C."/>
            <person name="Lueke W."/>
            <person name="Stahl-Henning C."/>
            <person name="Schneider J."/>
            <person name="Nieselt K."/>
            <person name="Eigen M."/>
            <person name="Hunsmann G."/>
        </authorList>
    </citation>
    <scope>NUCLEOTIDE SEQUENCE [GENOMIC DNA]</scope>
</reference>
<reference key="2">
    <citation type="journal article" date="2009" name="J. Virol.">
        <title>The human immunodeficiency virus type 2 Vpx protein usurps the CUL4A-DDB1 DCAF1 ubiquitin ligase to overcome a postentry block in macrophage infection.</title>
        <authorList>
            <person name="Bergamaschi A."/>
            <person name="Ayinde D."/>
            <person name="David A."/>
            <person name="Le Rouzic E."/>
            <person name="Morel M."/>
            <person name="Collin G."/>
            <person name="Descamps D."/>
            <person name="Damond F."/>
            <person name="Brun-Vezinet F."/>
            <person name="Nisole S."/>
            <person name="Margottin-Goguet F."/>
            <person name="Pancino G."/>
            <person name="Transy C."/>
        </authorList>
    </citation>
    <scope>FUNCTION</scope>
    <scope>INTERACTION WITH HOST DCAF1</scope>
    <scope>MUTAGENESIS OF GLN-76</scope>
    <source>
        <strain>Isolate GH-1</strain>
    </source>
</reference>
<reference key="3">
    <citation type="journal article" date="2012" name="Science">
        <title>AIDS/HIV. HIV interplay with SAMHD1.</title>
        <authorList>
            <person name="Schaller T."/>
            <person name="Goujon C."/>
            <person name="Malim M.H."/>
        </authorList>
    </citation>
    <scope>REVIEW</scope>
</reference>
<reference key="4">
    <citation type="journal article" date="2011" name="Nature">
        <title>SAMHD1 is the dendritic- and myeloid-cell-specific HIV-1 restriction factor counteracted by Vpx.</title>
        <authorList>
            <person name="Laguette N."/>
            <person name="Sobhian B."/>
            <person name="Casartelli N."/>
            <person name="Ringeard M."/>
            <person name="Chable-Bessia C."/>
            <person name="Segeral E."/>
            <person name="Yatim A."/>
            <person name="Emiliani S."/>
            <person name="Schwartz O."/>
            <person name="Benkirane M."/>
        </authorList>
    </citation>
    <scope>FUNCTION</scope>
</reference>
<reference key="5">
    <citation type="journal article" date="2011" name="Nature">
        <title>Vpx relieves inhibition of HIV-1 infection of macrophages mediated by the SAMHD1 protein.</title>
        <authorList>
            <person name="Hrecka K."/>
            <person name="Hao C."/>
            <person name="Gierszewska M."/>
            <person name="Swanson S.K."/>
            <person name="Kesik-Brodacka M."/>
            <person name="Srivastava S."/>
            <person name="Florens L."/>
            <person name="Washburn M.P."/>
            <person name="Skowronski J."/>
        </authorList>
    </citation>
    <scope>FUNCTION</scope>
    <scope>MUTAGENESIS OF GLN-76</scope>
</reference>
<reference key="6">
    <citation type="journal article" date="2012" name="J. Virol.">
        <title>The Vpx lentiviral accessory protein targets SAMHD1 for degradation in the nucleus.</title>
        <authorList>
            <person name="Hofmann H."/>
            <person name="Logue E.C."/>
            <person name="Bloch N."/>
            <person name="Daddacha W."/>
            <person name="Polsky S.B."/>
            <person name="Schultz M.L."/>
            <person name="Kim B."/>
            <person name="Landau N.R."/>
        </authorList>
    </citation>
    <scope>FUNCTION</scope>
</reference>
<keyword id="KW-0014">AIDS</keyword>
<keyword id="KW-1048">Host nucleus</keyword>
<keyword id="KW-0945">Host-virus interaction</keyword>
<keyword id="KW-1090">Inhibition of host innate immune response by virus</keyword>
<keyword id="KW-1185">Reference proteome</keyword>
<keyword id="KW-0899">Viral immunoevasion</keyword>
<keyword id="KW-0946">Virion</keyword>
<feature type="chain" id="PRO_0000085390" description="Protein Vpx">
    <location>
        <begin position="1"/>
        <end position="113"/>
    </location>
</feature>
<feature type="region of interest" description="Binds to human NUP153" evidence="3">
    <location>
        <begin position="61"/>
        <end position="80"/>
    </location>
</feature>
<feature type="region of interest" description="Disordered" evidence="4">
    <location>
        <begin position="94"/>
        <end position="113"/>
    </location>
</feature>
<feature type="short sequence motif" description="Nuclear localization signal" evidence="1">
    <location>
        <begin position="65"/>
        <end position="72"/>
    </location>
</feature>
<feature type="compositionally biased region" description="Pro residues" evidence="4">
    <location>
        <begin position="103"/>
        <end position="113"/>
    </location>
</feature>
<feature type="mutagenesis site" description="Complete loss of interaction with host DCAF1." evidence="5 7">
    <original>Q</original>
    <variation>LYS</variation>
    <location>
        <position position="76"/>
    </location>
</feature>
<comment type="function">
    <text evidence="5 6 7 8">Plays a role in nuclear translocation of the viral pre-integration complex (PIC), thus is required for the virus to infect non-dividing cells (PubMed:19264781, PubMed:21613998, PubMed:21720370, PubMed:22973040). Targets specific host proteins for degradation by the 26S proteasome (PubMed:19264781, PubMed:21613998, PubMed:21720370, PubMed:22973040). Acts by associating with the cellular CUL4A-DDB1 E3 ligase complex through direct interaction with host VPRPB/DCAF-1 (PubMed:19264781, PubMed:21613998, PubMed:21720370, PubMed:22973040). This change in the E3 ligase substrate specificity results in the degradation of host SAMHD1 (PubMed:19264781, PubMed:21613998, PubMed:21720370, PubMed:22973040). In turn, SAMHD1 depletion allows viral replication in host myeloid cells by preventing SAMHD1-mediated hydrolysis of intracellular dNTPs necessary for reverse transcription (PubMed:19264781, PubMed:21613998, PubMed:21720370, PubMed:22973040).</text>
</comment>
<comment type="subunit">
    <text evidence="1 2 5">Interacts with the P6 region of unprocessed GAG (By similarity). Interacts with host VPRBP/DCAF1, leading to change substrate specificity of the CUL4A-DDB1 E3 ligase complex (PubMed:19264781). Interacts with host NUP153 (By similarity).</text>
</comment>
<comment type="subcellular location">
    <subcellularLocation>
        <location>Virion</location>
    </subcellularLocation>
    <subcellularLocation>
        <location>Host nucleus</location>
    </subcellularLocation>
    <text evidence="1">Nuclear just after virion uncoating, or if expressed in the absence of unprocessed GAG.</text>
</comment>
<comment type="miscellaneous">
    <text>This isolate is from a German AIDS patient (with predominantly neurological complications) who was probably infected in Mali.</text>
</comment>
<comment type="similarity">
    <text evidence="9">Belongs to the lentivirus VPX protein family.</text>
</comment>
<dbReference type="EMBL" id="M30502">
    <property type="protein sequence ID" value="AAB00739.1"/>
    <property type="molecule type" value="Genomic_DNA"/>
</dbReference>
<dbReference type="RefSeq" id="NP_056840.1">
    <property type="nucleotide sequence ID" value="NC_001722.1"/>
</dbReference>
<dbReference type="SMR" id="P18099"/>
<dbReference type="BioGRID" id="1205550">
    <property type="interactions" value="38"/>
</dbReference>
<dbReference type="KEGG" id="vg:1724714"/>
<dbReference type="Proteomes" id="UP000002242">
    <property type="component" value="Segment"/>
</dbReference>
<dbReference type="GO" id="GO:0042025">
    <property type="term" value="C:host cell nucleus"/>
    <property type="evidence" value="ECO:0007669"/>
    <property type="project" value="UniProtKB-SubCell"/>
</dbReference>
<dbReference type="GO" id="GO:0044423">
    <property type="term" value="C:virion component"/>
    <property type="evidence" value="ECO:0007669"/>
    <property type="project" value="UniProtKB-KW"/>
</dbReference>
<dbReference type="GO" id="GO:0052170">
    <property type="term" value="P:symbiont-mediated suppression of host innate immune response"/>
    <property type="evidence" value="ECO:0007669"/>
    <property type="project" value="UniProtKB-KW"/>
</dbReference>
<dbReference type="GO" id="GO:0019058">
    <property type="term" value="P:viral life cycle"/>
    <property type="evidence" value="ECO:0007669"/>
    <property type="project" value="InterPro"/>
</dbReference>
<dbReference type="Gene3D" id="1.20.5.4730">
    <property type="match status" value="1"/>
</dbReference>
<dbReference type="InterPro" id="IPR053711">
    <property type="entry name" value="Lentiviral_Vpx_assoc_factor"/>
</dbReference>
<dbReference type="InterPro" id="IPR000012">
    <property type="entry name" value="RetroV_VpR/X"/>
</dbReference>
<dbReference type="Pfam" id="PF00522">
    <property type="entry name" value="VPR"/>
    <property type="match status" value="1"/>
</dbReference>
<proteinExistence type="evidence at protein level"/>
<name>VPX_HV2BE</name>
<gene>
    <name type="primary">vpx</name>
</gene>
<accession>P18099</accession>